<sequence>MLAWLLNMLKEEFSLSEVADILGVSKETLRRWDTAGKLVSQRNDENNYRFYKKEQLKNFEQAQFLFKSQWPDETKISNNVYTVLELFAGAGGMALGLEKAGLKSVLLNEIDSHACKTLRKNRPEWNVVEGDVSQVDFTPYRNTVDVLAGGFPCQAFSYAGKKLGFEDTRGTLFFEFARAAKEINPKVLLAENVRGLLNHDAGRTLETIKNIITDLGYTLFEPRVLKAIFYKVPQKRERLIIVAVRNDLADGIDYEWPSSYNKILTLKDALKKGELYDSDVPESEGQKYPKRKAEILSMVPPGGYWRDLPEDIQKEYMLKSFYLGGGKTGMARRLSWDEPSLTLTCAPAQKQTERCHPEETRPLTVREYARIQTFPDEWVFEGPMSAKYKQIGNAVPVNLSFAVGKSVVHLLDKINKR</sequence>
<comment type="function">
    <text evidence="3 5">A methylase that recognizes the double-stranded sequence 5'-GGNCC-3', methylates C-? on both strands, and protects the DNA from cleavage by both the Eco47I and Eco47II endonucleases.</text>
</comment>
<comment type="catalytic activity">
    <reaction evidence="2">
        <text>a 2'-deoxycytidine in DNA + S-adenosyl-L-methionine = a 5-methyl-2'-deoxycytidine in DNA + S-adenosyl-L-homocysteine + H(+)</text>
        <dbReference type="Rhea" id="RHEA:13681"/>
        <dbReference type="Rhea" id="RHEA-COMP:11369"/>
        <dbReference type="Rhea" id="RHEA-COMP:11370"/>
        <dbReference type="ChEBI" id="CHEBI:15378"/>
        <dbReference type="ChEBI" id="CHEBI:57856"/>
        <dbReference type="ChEBI" id="CHEBI:59789"/>
        <dbReference type="ChEBI" id="CHEBI:85452"/>
        <dbReference type="ChEBI" id="CHEBI:85454"/>
        <dbReference type="EC" id="2.1.1.37"/>
    </reaction>
</comment>
<comment type="similarity">
    <text evidence="1">Belongs to the class I-like SAM-binding methyltransferase superfamily. C5-methyltransferase family.</text>
</comment>
<evidence type="ECO:0000255" key="1">
    <source>
        <dbReference type="PROSITE-ProRule" id="PRU01016"/>
    </source>
</evidence>
<evidence type="ECO:0000255" key="2">
    <source>
        <dbReference type="PROSITE-ProRule" id="PRU10018"/>
    </source>
</evidence>
<evidence type="ECO:0000303" key="3">
    <source>
    </source>
</evidence>
<evidence type="ECO:0000303" key="4">
    <source>
    </source>
</evidence>
<evidence type="ECO:0000305" key="5">
    <source>
    </source>
</evidence>
<reference key="1">
    <citation type="journal article" date="1995" name="Gene">
        <title>Cloning and characterization of the unusual restriction-modification system comprising two restriction endonucleases and one methyltransferase.</title>
        <authorList>
            <person name="Stankevicius K."/>
            <person name="Povilionis P."/>
            <person name="Lubys A."/>
            <person name="Menkevicius S."/>
            <person name="Janulaitis A."/>
        </authorList>
    </citation>
    <scope>NUCLEOTIDE SEQUENCE [GENOMIC DNA]</scope>
    <scope>PROBABLE FUNCTION</scope>
    <source>
        <strain>RFL47</strain>
    </source>
</reference>
<reference key="2">
    <citation type="journal article" date="2003" name="Nucleic Acids Res.">
        <title>A nomenclature for restriction enzymes, DNA methyltransferases, homing endonucleases and their genes.</title>
        <authorList>
            <person name="Roberts R.J."/>
            <person name="Belfort M."/>
            <person name="Bestor T."/>
            <person name="Bhagwat A.S."/>
            <person name="Bickle T.A."/>
            <person name="Bitinaite J."/>
            <person name="Blumenthal R.M."/>
            <person name="Degtyarev S.K."/>
            <person name="Dryden D.T."/>
            <person name="Dybvig K."/>
            <person name="Firman K."/>
            <person name="Gromova E.S."/>
            <person name="Gumport R.I."/>
            <person name="Halford S.E."/>
            <person name="Hattman S."/>
            <person name="Heitman J."/>
            <person name="Hornby D.P."/>
            <person name="Janulaitis A."/>
            <person name="Jeltsch A."/>
            <person name="Josephsen J."/>
            <person name="Kiss A."/>
            <person name="Klaenhammer T.R."/>
            <person name="Kobayashi I."/>
            <person name="Kong H."/>
            <person name="Krueger D.H."/>
            <person name="Lacks S."/>
            <person name="Marinus M.G."/>
            <person name="Miyahara M."/>
            <person name="Morgan R.D."/>
            <person name="Murray N.E."/>
            <person name="Nagaraja V."/>
            <person name="Piekarowicz A."/>
            <person name="Pingoud A."/>
            <person name="Raleigh E."/>
            <person name="Rao D.N."/>
            <person name="Reich N."/>
            <person name="Repin V.E."/>
            <person name="Selker E.U."/>
            <person name="Shaw P.C."/>
            <person name="Stein D.C."/>
            <person name="Stoddard B.L."/>
            <person name="Szybalski W."/>
            <person name="Trautner T.A."/>
            <person name="Van Etten J.L."/>
            <person name="Vitor J.M."/>
            <person name="Wilson G.G."/>
            <person name="Xu S.Y."/>
        </authorList>
    </citation>
    <scope>NOMENCLATURE</scope>
</reference>
<proteinExistence type="inferred from homology"/>
<gene>
    <name evidence="4" type="primary">eco47IIM</name>
</gene>
<organism>
    <name type="scientific">Escherichia coli</name>
    <dbReference type="NCBI Taxonomy" id="562"/>
    <lineage>
        <taxon>Bacteria</taxon>
        <taxon>Pseudomonadati</taxon>
        <taxon>Pseudomonadota</taxon>
        <taxon>Gammaproteobacteria</taxon>
        <taxon>Enterobacterales</taxon>
        <taxon>Enterobacteriaceae</taxon>
        <taxon>Escherichia</taxon>
    </lineage>
</organism>
<protein>
    <recommendedName>
        <fullName evidence="3">Type II methyltransferase M.Eco47II</fullName>
        <shortName evidence="4">M.Eco47II</shortName>
        <ecNumber>2.1.1.37</ecNumber>
    </recommendedName>
    <alternativeName>
        <fullName>Cytosine-specific methyltransferase Eco47II</fullName>
    </alternativeName>
    <alternativeName>
        <fullName>Modification methylase Eco47II</fullName>
    </alternativeName>
</protein>
<keyword id="KW-0238">DNA-binding</keyword>
<keyword id="KW-0489">Methyltransferase</keyword>
<keyword id="KW-0680">Restriction system</keyword>
<keyword id="KW-0949">S-adenosyl-L-methionine</keyword>
<keyword id="KW-0808">Transferase</keyword>
<feature type="chain" id="PRO_0000087875" description="Type II methyltransferase M.Eco47II">
    <location>
        <begin position="1"/>
        <end position="417"/>
    </location>
</feature>
<feature type="domain" description="SAM-dependent MTase C5-type" evidence="1">
    <location>
        <begin position="81"/>
        <end position="414"/>
    </location>
</feature>
<feature type="active site" evidence="1 2">
    <location>
        <position position="153"/>
    </location>
</feature>
<accession>P50196</accession>
<name>MTE8_ECOLX</name>
<dbReference type="EC" id="2.1.1.37"/>
<dbReference type="EMBL" id="X82105">
    <property type="protein sequence ID" value="CAA57629.1"/>
    <property type="molecule type" value="Genomic_DNA"/>
</dbReference>
<dbReference type="SMR" id="P50196"/>
<dbReference type="REBASE" id="3372">
    <property type="entry name" value="M.Eco47II"/>
</dbReference>
<dbReference type="PRO" id="PR:P50196"/>
<dbReference type="GO" id="GO:0003886">
    <property type="term" value="F:DNA (cytosine-5-)-methyltransferase activity"/>
    <property type="evidence" value="ECO:0007669"/>
    <property type="project" value="UniProtKB-EC"/>
</dbReference>
<dbReference type="GO" id="GO:0003677">
    <property type="term" value="F:DNA binding"/>
    <property type="evidence" value="ECO:0007669"/>
    <property type="project" value="UniProtKB-KW"/>
</dbReference>
<dbReference type="GO" id="GO:0009307">
    <property type="term" value="P:DNA restriction-modification system"/>
    <property type="evidence" value="ECO:0007669"/>
    <property type="project" value="UniProtKB-KW"/>
</dbReference>
<dbReference type="GO" id="GO:0032259">
    <property type="term" value="P:methylation"/>
    <property type="evidence" value="ECO:0007669"/>
    <property type="project" value="UniProtKB-KW"/>
</dbReference>
<dbReference type="GO" id="GO:0044027">
    <property type="term" value="P:negative regulation of gene expression via chromosomal CpG island methylation"/>
    <property type="evidence" value="ECO:0007669"/>
    <property type="project" value="TreeGrafter"/>
</dbReference>
<dbReference type="GO" id="GO:0006355">
    <property type="term" value="P:regulation of DNA-templated transcription"/>
    <property type="evidence" value="ECO:0007669"/>
    <property type="project" value="InterPro"/>
</dbReference>
<dbReference type="CDD" id="cd00315">
    <property type="entry name" value="Cyt_C5_DNA_methylase"/>
    <property type="match status" value="1"/>
</dbReference>
<dbReference type="CDD" id="cd04762">
    <property type="entry name" value="HTH_MerR-trunc"/>
    <property type="match status" value="1"/>
</dbReference>
<dbReference type="Gene3D" id="1.10.1660.10">
    <property type="match status" value="1"/>
</dbReference>
<dbReference type="Gene3D" id="3.90.120.10">
    <property type="entry name" value="DNA Methylase, subunit A, domain 2"/>
    <property type="match status" value="1"/>
</dbReference>
<dbReference type="Gene3D" id="3.40.50.150">
    <property type="entry name" value="Vaccinia Virus protein VP39"/>
    <property type="match status" value="1"/>
</dbReference>
<dbReference type="InterPro" id="IPR050390">
    <property type="entry name" value="C5-Methyltransferase"/>
</dbReference>
<dbReference type="InterPro" id="IPR018117">
    <property type="entry name" value="C5_DNA_meth_AS"/>
</dbReference>
<dbReference type="InterPro" id="IPR001525">
    <property type="entry name" value="C5_MeTfrase"/>
</dbReference>
<dbReference type="InterPro" id="IPR031303">
    <property type="entry name" value="C5_meth_CS"/>
</dbReference>
<dbReference type="InterPro" id="IPR009061">
    <property type="entry name" value="DNA-bd_dom_put_sf"/>
</dbReference>
<dbReference type="InterPro" id="IPR000551">
    <property type="entry name" value="MerR-type_HTH_dom"/>
</dbReference>
<dbReference type="InterPro" id="IPR029063">
    <property type="entry name" value="SAM-dependent_MTases_sf"/>
</dbReference>
<dbReference type="NCBIfam" id="TIGR00675">
    <property type="entry name" value="dcm"/>
    <property type="match status" value="1"/>
</dbReference>
<dbReference type="PANTHER" id="PTHR10629">
    <property type="entry name" value="CYTOSINE-SPECIFIC METHYLTRANSFERASE"/>
    <property type="match status" value="1"/>
</dbReference>
<dbReference type="PANTHER" id="PTHR10629:SF52">
    <property type="entry name" value="DNA (CYTOSINE-5)-METHYLTRANSFERASE 1"/>
    <property type="match status" value="1"/>
</dbReference>
<dbReference type="Pfam" id="PF00145">
    <property type="entry name" value="DNA_methylase"/>
    <property type="match status" value="1"/>
</dbReference>
<dbReference type="Pfam" id="PF00376">
    <property type="entry name" value="MerR"/>
    <property type="match status" value="1"/>
</dbReference>
<dbReference type="PRINTS" id="PR00105">
    <property type="entry name" value="C5METTRFRASE"/>
</dbReference>
<dbReference type="SUPFAM" id="SSF46955">
    <property type="entry name" value="Putative DNA-binding domain"/>
    <property type="match status" value="1"/>
</dbReference>
<dbReference type="SUPFAM" id="SSF53335">
    <property type="entry name" value="S-adenosyl-L-methionine-dependent methyltransferases"/>
    <property type="match status" value="1"/>
</dbReference>
<dbReference type="PROSITE" id="PS00094">
    <property type="entry name" value="C5_MTASE_1"/>
    <property type="match status" value="1"/>
</dbReference>
<dbReference type="PROSITE" id="PS00095">
    <property type="entry name" value="C5_MTASE_2"/>
    <property type="match status" value="1"/>
</dbReference>
<dbReference type="PROSITE" id="PS51679">
    <property type="entry name" value="SAM_MT_C5"/>
    <property type="match status" value="1"/>
</dbReference>